<organism>
    <name type="scientific">Albidiferax ferrireducens (strain ATCC BAA-621 / DSM 15236 / T118)</name>
    <name type="common">Rhodoferax ferrireducens</name>
    <dbReference type="NCBI Taxonomy" id="338969"/>
    <lineage>
        <taxon>Bacteria</taxon>
        <taxon>Pseudomonadati</taxon>
        <taxon>Pseudomonadota</taxon>
        <taxon>Betaproteobacteria</taxon>
        <taxon>Burkholderiales</taxon>
        <taxon>Comamonadaceae</taxon>
        <taxon>Rhodoferax</taxon>
    </lineage>
</organism>
<feature type="chain" id="PRO_1000002527" description="Holliday junction branch migration complex subunit RuvA">
    <location>
        <begin position="1"/>
        <end position="190"/>
    </location>
</feature>
<feature type="region of interest" description="Domain I" evidence="1">
    <location>
        <begin position="1"/>
        <end position="64"/>
    </location>
</feature>
<feature type="region of interest" description="Domain II" evidence="1">
    <location>
        <begin position="65"/>
        <end position="137"/>
    </location>
</feature>
<feature type="region of interest" description="Flexible linker" evidence="1">
    <location>
        <begin position="137"/>
        <end position="141"/>
    </location>
</feature>
<feature type="region of interest" description="Domain III" evidence="1">
    <location>
        <begin position="142"/>
        <end position="190"/>
    </location>
</feature>
<proteinExistence type="inferred from homology"/>
<gene>
    <name evidence="1" type="primary">ruvA</name>
    <name type="ordered locus">Rfer_0739</name>
</gene>
<keyword id="KW-0963">Cytoplasm</keyword>
<keyword id="KW-0227">DNA damage</keyword>
<keyword id="KW-0233">DNA recombination</keyword>
<keyword id="KW-0234">DNA repair</keyword>
<keyword id="KW-0238">DNA-binding</keyword>
<keyword id="KW-1185">Reference proteome</keyword>
<accession>Q220R4</accession>
<reference key="1">
    <citation type="submission" date="2006-02" db="EMBL/GenBank/DDBJ databases">
        <title>Complete sequence of chromosome of Rhodoferax ferrireducens DSM 15236.</title>
        <authorList>
            <person name="Copeland A."/>
            <person name="Lucas S."/>
            <person name="Lapidus A."/>
            <person name="Barry K."/>
            <person name="Detter J.C."/>
            <person name="Glavina del Rio T."/>
            <person name="Hammon N."/>
            <person name="Israni S."/>
            <person name="Pitluck S."/>
            <person name="Brettin T."/>
            <person name="Bruce D."/>
            <person name="Han C."/>
            <person name="Tapia R."/>
            <person name="Gilna P."/>
            <person name="Kiss H."/>
            <person name="Schmutz J."/>
            <person name="Larimer F."/>
            <person name="Land M."/>
            <person name="Kyrpides N."/>
            <person name="Ivanova N."/>
            <person name="Richardson P."/>
        </authorList>
    </citation>
    <scope>NUCLEOTIDE SEQUENCE [LARGE SCALE GENOMIC DNA]</scope>
    <source>
        <strain>ATCC BAA-621 / DSM 15236 / T118</strain>
    </source>
</reference>
<dbReference type="EMBL" id="CP000267">
    <property type="protein sequence ID" value="ABD68489.1"/>
    <property type="molecule type" value="Genomic_DNA"/>
</dbReference>
<dbReference type="RefSeq" id="WP_011463062.1">
    <property type="nucleotide sequence ID" value="NC_007908.1"/>
</dbReference>
<dbReference type="SMR" id="Q220R4"/>
<dbReference type="STRING" id="338969.Rfer_0739"/>
<dbReference type="KEGG" id="rfr:Rfer_0739"/>
<dbReference type="eggNOG" id="COG0632">
    <property type="taxonomic scope" value="Bacteria"/>
</dbReference>
<dbReference type="HOGENOM" id="CLU_087936_0_0_4"/>
<dbReference type="OrthoDB" id="5293449at2"/>
<dbReference type="Proteomes" id="UP000008332">
    <property type="component" value="Chromosome"/>
</dbReference>
<dbReference type="GO" id="GO:0005737">
    <property type="term" value="C:cytoplasm"/>
    <property type="evidence" value="ECO:0007669"/>
    <property type="project" value="UniProtKB-SubCell"/>
</dbReference>
<dbReference type="GO" id="GO:0009379">
    <property type="term" value="C:Holliday junction helicase complex"/>
    <property type="evidence" value="ECO:0007669"/>
    <property type="project" value="InterPro"/>
</dbReference>
<dbReference type="GO" id="GO:0048476">
    <property type="term" value="C:Holliday junction resolvase complex"/>
    <property type="evidence" value="ECO:0007669"/>
    <property type="project" value="UniProtKB-UniRule"/>
</dbReference>
<dbReference type="GO" id="GO:0005524">
    <property type="term" value="F:ATP binding"/>
    <property type="evidence" value="ECO:0007669"/>
    <property type="project" value="InterPro"/>
</dbReference>
<dbReference type="GO" id="GO:0000400">
    <property type="term" value="F:four-way junction DNA binding"/>
    <property type="evidence" value="ECO:0007669"/>
    <property type="project" value="UniProtKB-UniRule"/>
</dbReference>
<dbReference type="GO" id="GO:0009378">
    <property type="term" value="F:four-way junction helicase activity"/>
    <property type="evidence" value="ECO:0007669"/>
    <property type="project" value="InterPro"/>
</dbReference>
<dbReference type="GO" id="GO:0006310">
    <property type="term" value="P:DNA recombination"/>
    <property type="evidence" value="ECO:0007669"/>
    <property type="project" value="UniProtKB-UniRule"/>
</dbReference>
<dbReference type="GO" id="GO:0006281">
    <property type="term" value="P:DNA repair"/>
    <property type="evidence" value="ECO:0007669"/>
    <property type="project" value="UniProtKB-UniRule"/>
</dbReference>
<dbReference type="Gene3D" id="1.10.150.20">
    <property type="entry name" value="5' to 3' exonuclease, C-terminal subdomain"/>
    <property type="match status" value="1"/>
</dbReference>
<dbReference type="Gene3D" id="1.10.8.10">
    <property type="entry name" value="DNA helicase RuvA subunit, C-terminal domain"/>
    <property type="match status" value="1"/>
</dbReference>
<dbReference type="Gene3D" id="2.40.50.140">
    <property type="entry name" value="Nucleic acid-binding proteins"/>
    <property type="match status" value="1"/>
</dbReference>
<dbReference type="HAMAP" id="MF_00031">
    <property type="entry name" value="DNA_HJ_migration_RuvA"/>
    <property type="match status" value="1"/>
</dbReference>
<dbReference type="InterPro" id="IPR013849">
    <property type="entry name" value="DNA_helicase_Holl-junc_RuvA_I"/>
</dbReference>
<dbReference type="InterPro" id="IPR003583">
    <property type="entry name" value="Hlx-hairpin-Hlx_DNA-bd_motif"/>
</dbReference>
<dbReference type="InterPro" id="IPR012340">
    <property type="entry name" value="NA-bd_OB-fold"/>
</dbReference>
<dbReference type="InterPro" id="IPR000085">
    <property type="entry name" value="RuvA"/>
</dbReference>
<dbReference type="InterPro" id="IPR010994">
    <property type="entry name" value="RuvA_2-like"/>
</dbReference>
<dbReference type="InterPro" id="IPR011114">
    <property type="entry name" value="RuvA_C"/>
</dbReference>
<dbReference type="InterPro" id="IPR036267">
    <property type="entry name" value="RuvA_C_sf"/>
</dbReference>
<dbReference type="NCBIfam" id="TIGR00084">
    <property type="entry name" value="ruvA"/>
    <property type="match status" value="1"/>
</dbReference>
<dbReference type="Pfam" id="PF14520">
    <property type="entry name" value="HHH_5"/>
    <property type="match status" value="1"/>
</dbReference>
<dbReference type="Pfam" id="PF07499">
    <property type="entry name" value="RuvA_C"/>
    <property type="match status" value="1"/>
</dbReference>
<dbReference type="Pfam" id="PF01330">
    <property type="entry name" value="RuvA_N"/>
    <property type="match status" value="1"/>
</dbReference>
<dbReference type="SMART" id="SM00278">
    <property type="entry name" value="HhH1"/>
    <property type="match status" value="2"/>
</dbReference>
<dbReference type="SUPFAM" id="SSF46929">
    <property type="entry name" value="DNA helicase RuvA subunit, C-terminal domain"/>
    <property type="match status" value="1"/>
</dbReference>
<dbReference type="SUPFAM" id="SSF50249">
    <property type="entry name" value="Nucleic acid-binding proteins"/>
    <property type="match status" value="1"/>
</dbReference>
<dbReference type="SUPFAM" id="SSF47781">
    <property type="entry name" value="RuvA domain 2-like"/>
    <property type="match status" value="1"/>
</dbReference>
<comment type="function">
    <text evidence="1">The RuvA-RuvB-RuvC complex processes Holliday junction (HJ) DNA during genetic recombination and DNA repair, while the RuvA-RuvB complex plays an important role in the rescue of blocked DNA replication forks via replication fork reversal (RFR). RuvA specifically binds to HJ cruciform DNA, conferring on it an open structure. The RuvB hexamer acts as an ATP-dependent pump, pulling dsDNA into and through the RuvAB complex. HJ branch migration allows RuvC to scan DNA until it finds its consensus sequence, where it cleaves and resolves the cruciform DNA.</text>
</comment>
<comment type="subunit">
    <text evidence="1">Homotetramer. Forms an RuvA(8)-RuvB(12)-Holliday junction (HJ) complex. HJ DNA is sandwiched between 2 RuvA tetramers; dsDNA enters through RuvA and exits via RuvB. An RuvB hexamer assembles on each DNA strand where it exits the tetramer. Each RuvB hexamer is contacted by two RuvA subunits (via domain III) on 2 adjacent RuvB subunits; this complex drives branch migration. In the full resolvosome a probable DNA-RuvA(4)-RuvB(12)-RuvC(2) complex forms which resolves the HJ.</text>
</comment>
<comment type="subcellular location">
    <subcellularLocation>
        <location evidence="1">Cytoplasm</location>
    </subcellularLocation>
</comment>
<comment type="domain">
    <text evidence="1">Has three domains with a flexible linker between the domains II and III and assumes an 'L' shape. Domain III is highly mobile and contacts RuvB.</text>
</comment>
<comment type="similarity">
    <text evidence="1">Belongs to the RuvA family.</text>
</comment>
<evidence type="ECO:0000255" key="1">
    <source>
        <dbReference type="HAMAP-Rule" id="MF_00031"/>
    </source>
</evidence>
<name>RUVA_ALBFT</name>
<sequence length="190" mass="19919">MIGKLSGTLDDKNPPQVIVDCHGVGYEVLVPMSTFYNLPELGARVSLLTHFVVREDAQILYGFATSQERAAFRELIKISGVGPRTALSVLSGMSVAELAQAVTLQEGGRLIKVPGIGKKTAERLLLELKGKLGPDIGVAASVANDSQADILQALLALGYSDKEAAAALKALPSDVGVSEGIRLALRALGK</sequence>
<protein>
    <recommendedName>
        <fullName evidence="1">Holliday junction branch migration complex subunit RuvA</fullName>
    </recommendedName>
</protein>